<keyword id="KW-0687">Ribonucleoprotein</keyword>
<keyword id="KW-0689">Ribosomal protein</keyword>
<keyword id="KW-0694">RNA-binding</keyword>
<keyword id="KW-0699">rRNA-binding</keyword>
<gene>
    <name evidence="1" type="primary">rpsD</name>
    <name type="ordered locus">Avin_06490</name>
</gene>
<comment type="function">
    <text evidence="1">One of the primary rRNA binding proteins, it binds directly to 16S rRNA where it nucleates assembly of the body of the 30S subunit.</text>
</comment>
<comment type="function">
    <text evidence="1">With S5 and S12 plays an important role in translational accuracy.</text>
</comment>
<comment type="subunit">
    <text evidence="1">Part of the 30S ribosomal subunit. Contacts protein S5. The interaction surface between S4 and S5 is involved in control of translational fidelity.</text>
</comment>
<comment type="similarity">
    <text evidence="1">Belongs to the universal ribosomal protein uS4 family.</text>
</comment>
<feature type="chain" id="PRO_1000214278" description="Small ribosomal subunit protein uS4">
    <location>
        <begin position="1"/>
        <end position="206"/>
    </location>
</feature>
<feature type="domain" description="S4 RNA-binding" evidence="1">
    <location>
        <begin position="96"/>
        <end position="156"/>
    </location>
</feature>
<dbReference type="EMBL" id="CP001157">
    <property type="protein sequence ID" value="ACO76900.1"/>
    <property type="molecule type" value="Genomic_DNA"/>
</dbReference>
<dbReference type="RefSeq" id="WP_012699325.1">
    <property type="nucleotide sequence ID" value="NC_012560.1"/>
</dbReference>
<dbReference type="SMR" id="C1DKN7"/>
<dbReference type="STRING" id="322710.Avin_06490"/>
<dbReference type="EnsemblBacteria" id="ACO76900">
    <property type="protein sequence ID" value="ACO76900"/>
    <property type="gene ID" value="Avin_06490"/>
</dbReference>
<dbReference type="GeneID" id="88184060"/>
<dbReference type="KEGG" id="avn:Avin_06490"/>
<dbReference type="eggNOG" id="COG0522">
    <property type="taxonomic scope" value="Bacteria"/>
</dbReference>
<dbReference type="HOGENOM" id="CLU_092403_0_2_6"/>
<dbReference type="OrthoDB" id="9803672at2"/>
<dbReference type="Proteomes" id="UP000002424">
    <property type="component" value="Chromosome"/>
</dbReference>
<dbReference type="GO" id="GO:0015935">
    <property type="term" value="C:small ribosomal subunit"/>
    <property type="evidence" value="ECO:0007669"/>
    <property type="project" value="InterPro"/>
</dbReference>
<dbReference type="GO" id="GO:0019843">
    <property type="term" value="F:rRNA binding"/>
    <property type="evidence" value="ECO:0007669"/>
    <property type="project" value="UniProtKB-UniRule"/>
</dbReference>
<dbReference type="GO" id="GO:0003735">
    <property type="term" value="F:structural constituent of ribosome"/>
    <property type="evidence" value="ECO:0007669"/>
    <property type="project" value="InterPro"/>
</dbReference>
<dbReference type="GO" id="GO:0042274">
    <property type="term" value="P:ribosomal small subunit biogenesis"/>
    <property type="evidence" value="ECO:0007669"/>
    <property type="project" value="TreeGrafter"/>
</dbReference>
<dbReference type="GO" id="GO:0006412">
    <property type="term" value="P:translation"/>
    <property type="evidence" value="ECO:0007669"/>
    <property type="project" value="UniProtKB-UniRule"/>
</dbReference>
<dbReference type="CDD" id="cd00165">
    <property type="entry name" value="S4"/>
    <property type="match status" value="1"/>
</dbReference>
<dbReference type="FunFam" id="1.10.1050.10:FF:000001">
    <property type="entry name" value="30S ribosomal protein S4"/>
    <property type="match status" value="1"/>
</dbReference>
<dbReference type="FunFam" id="3.10.290.10:FF:000001">
    <property type="entry name" value="30S ribosomal protein S4"/>
    <property type="match status" value="1"/>
</dbReference>
<dbReference type="Gene3D" id="1.10.1050.10">
    <property type="entry name" value="Ribosomal Protein S4 Delta 41, Chain A, domain 1"/>
    <property type="match status" value="1"/>
</dbReference>
<dbReference type="Gene3D" id="3.10.290.10">
    <property type="entry name" value="RNA-binding S4 domain"/>
    <property type="match status" value="1"/>
</dbReference>
<dbReference type="HAMAP" id="MF_01306_B">
    <property type="entry name" value="Ribosomal_uS4_B"/>
    <property type="match status" value="1"/>
</dbReference>
<dbReference type="InterPro" id="IPR022801">
    <property type="entry name" value="Ribosomal_uS4"/>
</dbReference>
<dbReference type="InterPro" id="IPR005709">
    <property type="entry name" value="Ribosomal_uS4_bac-type"/>
</dbReference>
<dbReference type="InterPro" id="IPR018079">
    <property type="entry name" value="Ribosomal_uS4_CS"/>
</dbReference>
<dbReference type="InterPro" id="IPR001912">
    <property type="entry name" value="Ribosomal_uS4_N"/>
</dbReference>
<dbReference type="InterPro" id="IPR002942">
    <property type="entry name" value="S4_RNA-bd"/>
</dbReference>
<dbReference type="InterPro" id="IPR036986">
    <property type="entry name" value="S4_RNA-bd_sf"/>
</dbReference>
<dbReference type="NCBIfam" id="NF003717">
    <property type="entry name" value="PRK05327.1"/>
    <property type="match status" value="1"/>
</dbReference>
<dbReference type="NCBIfam" id="TIGR01017">
    <property type="entry name" value="rpsD_bact"/>
    <property type="match status" value="1"/>
</dbReference>
<dbReference type="PANTHER" id="PTHR11831">
    <property type="entry name" value="30S 40S RIBOSOMAL PROTEIN"/>
    <property type="match status" value="1"/>
</dbReference>
<dbReference type="PANTHER" id="PTHR11831:SF4">
    <property type="entry name" value="SMALL RIBOSOMAL SUBUNIT PROTEIN US4M"/>
    <property type="match status" value="1"/>
</dbReference>
<dbReference type="Pfam" id="PF00163">
    <property type="entry name" value="Ribosomal_S4"/>
    <property type="match status" value="1"/>
</dbReference>
<dbReference type="Pfam" id="PF01479">
    <property type="entry name" value="S4"/>
    <property type="match status" value="1"/>
</dbReference>
<dbReference type="SMART" id="SM01390">
    <property type="entry name" value="Ribosomal_S4"/>
    <property type="match status" value="1"/>
</dbReference>
<dbReference type="SMART" id="SM00363">
    <property type="entry name" value="S4"/>
    <property type="match status" value="1"/>
</dbReference>
<dbReference type="SUPFAM" id="SSF55174">
    <property type="entry name" value="Alpha-L RNA-binding motif"/>
    <property type="match status" value="1"/>
</dbReference>
<dbReference type="PROSITE" id="PS00632">
    <property type="entry name" value="RIBOSOMAL_S4"/>
    <property type="match status" value="1"/>
</dbReference>
<dbReference type="PROSITE" id="PS50889">
    <property type="entry name" value="S4"/>
    <property type="match status" value="1"/>
</dbReference>
<evidence type="ECO:0000255" key="1">
    <source>
        <dbReference type="HAMAP-Rule" id="MF_01306"/>
    </source>
</evidence>
<evidence type="ECO:0000305" key="2"/>
<proteinExistence type="inferred from homology"/>
<accession>C1DKN7</accession>
<organism>
    <name type="scientific">Azotobacter vinelandii (strain DJ / ATCC BAA-1303)</name>
    <dbReference type="NCBI Taxonomy" id="322710"/>
    <lineage>
        <taxon>Bacteria</taxon>
        <taxon>Pseudomonadati</taxon>
        <taxon>Pseudomonadota</taxon>
        <taxon>Gammaproteobacteria</taxon>
        <taxon>Pseudomonadales</taxon>
        <taxon>Pseudomonadaceae</taxon>
        <taxon>Azotobacter</taxon>
    </lineage>
</organism>
<protein>
    <recommendedName>
        <fullName evidence="1">Small ribosomal subunit protein uS4</fullName>
    </recommendedName>
    <alternativeName>
        <fullName evidence="2">30S ribosomal protein S4</fullName>
    </alternativeName>
</protein>
<sequence>MARYIGPKCKLSRREGTDLFLKSGSRALESKCNVESAPGIHGQRRGRLSEYGTQLREKQKVRRIYGVLERQFSGYYKEASRRKGSTGENLLQLLECRLDNVVYRMGFGATRAESRQLISHKAITVNGQTVNIPSYQVKVGDVVAIREKAKNQLRIAQALELCAQRGRVEWVEVDTEKKSGVFKSVPARSDLSADINENLIVELYSK</sequence>
<reference key="1">
    <citation type="journal article" date="2009" name="J. Bacteriol.">
        <title>Genome sequence of Azotobacter vinelandii, an obligate aerobe specialized to support diverse anaerobic metabolic processes.</title>
        <authorList>
            <person name="Setubal J.C."/>
            <person name="Dos Santos P."/>
            <person name="Goldman B.S."/>
            <person name="Ertesvaag H."/>
            <person name="Espin G."/>
            <person name="Rubio L.M."/>
            <person name="Valla S."/>
            <person name="Almeida N.F."/>
            <person name="Balasubramanian D."/>
            <person name="Cromes L."/>
            <person name="Curatti L."/>
            <person name="Du Z."/>
            <person name="Godsy E."/>
            <person name="Goodner B."/>
            <person name="Hellner-Burris K."/>
            <person name="Hernandez J.A."/>
            <person name="Houmiel K."/>
            <person name="Imperial J."/>
            <person name="Kennedy C."/>
            <person name="Larson T.J."/>
            <person name="Latreille P."/>
            <person name="Ligon L.S."/>
            <person name="Lu J."/>
            <person name="Maerk M."/>
            <person name="Miller N.M."/>
            <person name="Norton S."/>
            <person name="O'Carroll I.P."/>
            <person name="Paulsen I."/>
            <person name="Raulfs E.C."/>
            <person name="Roemer R."/>
            <person name="Rosser J."/>
            <person name="Segura D."/>
            <person name="Slater S."/>
            <person name="Stricklin S.L."/>
            <person name="Studholme D.J."/>
            <person name="Sun J."/>
            <person name="Viana C.J."/>
            <person name="Wallin E."/>
            <person name="Wang B."/>
            <person name="Wheeler C."/>
            <person name="Zhu H."/>
            <person name="Dean D.R."/>
            <person name="Dixon R."/>
            <person name="Wood D."/>
        </authorList>
    </citation>
    <scope>NUCLEOTIDE SEQUENCE [LARGE SCALE GENOMIC DNA]</scope>
    <source>
        <strain>DJ / ATCC BAA-1303</strain>
    </source>
</reference>
<name>RS4_AZOVD</name>